<gene>
    <name type="primary">RPS3B</name>
    <name type="ordered locus">At3g53870</name>
    <name type="ORF">F5K20_170</name>
</gene>
<protein>
    <recommendedName>
        <fullName evidence="2">Small ribosomal subunit protein uS3y</fullName>
    </recommendedName>
    <alternativeName>
        <fullName>40S ribosomal protein S3-2</fullName>
    </alternativeName>
</protein>
<sequence>MTTQISKKRKFVADGVFYAELNEVLTRELAEDGYSGVEVRVTPMRTEIIIRATRTQNVLGEKGRRIRELTSLVQKRFKFPVDSVELYAEKVNNRGLCAIAQAESLRYKLLGGLAVRRACYGVLRFVMESGAKGCEVIVSGKLRAARAKSMKFKDGYMVSSGQPTKEYIDSAVRHVLLRQGVLGIKVKVMLDWDPKGISGPKTPLPDVVIIHSPKEEEAIYAPAQVAAPAALVADAPLTAVDYPAMIPVA</sequence>
<name>RS3B_ARATH</name>
<organism>
    <name type="scientific">Arabidopsis thaliana</name>
    <name type="common">Mouse-ear cress</name>
    <dbReference type="NCBI Taxonomy" id="3702"/>
    <lineage>
        <taxon>Eukaryota</taxon>
        <taxon>Viridiplantae</taxon>
        <taxon>Streptophyta</taxon>
        <taxon>Embryophyta</taxon>
        <taxon>Tracheophyta</taxon>
        <taxon>Spermatophyta</taxon>
        <taxon>Magnoliopsida</taxon>
        <taxon>eudicotyledons</taxon>
        <taxon>Gunneridae</taxon>
        <taxon>Pentapetalae</taxon>
        <taxon>rosids</taxon>
        <taxon>malvids</taxon>
        <taxon>Brassicales</taxon>
        <taxon>Brassicaceae</taxon>
        <taxon>Camelineae</taxon>
        <taxon>Arabidopsis</taxon>
    </lineage>
</organism>
<dbReference type="EMBL" id="AL132960">
    <property type="protein sequence ID" value="CAB88349.1"/>
    <property type="molecule type" value="Genomic_DNA"/>
</dbReference>
<dbReference type="EMBL" id="CP002686">
    <property type="protein sequence ID" value="AEE79152.1"/>
    <property type="molecule type" value="Genomic_DNA"/>
</dbReference>
<dbReference type="EMBL" id="AF428405">
    <property type="protein sequence ID" value="AAL16173.1"/>
    <property type="molecule type" value="mRNA"/>
</dbReference>
<dbReference type="EMBL" id="AY035022">
    <property type="protein sequence ID" value="AAK59527.1"/>
    <property type="molecule type" value="mRNA"/>
</dbReference>
<dbReference type="EMBL" id="AY059090">
    <property type="protein sequence ID" value="AAL15196.1"/>
    <property type="molecule type" value="mRNA"/>
</dbReference>
<dbReference type="EMBL" id="AY088808">
    <property type="protein sequence ID" value="AAM67118.1"/>
    <property type="molecule type" value="mRNA"/>
</dbReference>
<dbReference type="PIR" id="T45927">
    <property type="entry name" value="T45927"/>
</dbReference>
<dbReference type="RefSeq" id="NP_190955.1">
    <property type="nucleotide sequence ID" value="NM_115247.5"/>
</dbReference>
<dbReference type="SMR" id="Q9M339"/>
<dbReference type="BioGRID" id="9871">
    <property type="interactions" value="155"/>
</dbReference>
<dbReference type="FunCoup" id="Q9M339">
    <property type="interactions" value="3511"/>
</dbReference>
<dbReference type="IntAct" id="Q9M339">
    <property type="interactions" value="1"/>
</dbReference>
<dbReference type="STRING" id="3702.Q9M339"/>
<dbReference type="iPTMnet" id="Q9M339"/>
<dbReference type="PaxDb" id="3702-AT3G53870.1"/>
<dbReference type="ProteomicsDB" id="228102"/>
<dbReference type="EnsemblPlants" id="AT3G53870.1">
    <property type="protein sequence ID" value="AT3G53870.1"/>
    <property type="gene ID" value="AT3G53870"/>
</dbReference>
<dbReference type="GeneID" id="824554"/>
<dbReference type="Gramene" id="AT3G53870.1">
    <property type="protein sequence ID" value="AT3G53870.1"/>
    <property type="gene ID" value="AT3G53870"/>
</dbReference>
<dbReference type="KEGG" id="ath:AT3G53870"/>
<dbReference type="Araport" id="AT3G53870"/>
<dbReference type="TAIR" id="AT3G53870"/>
<dbReference type="eggNOG" id="KOG3181">
    <property type="taxonomic scope" value="Eukaryota"/>
</dbReference>
<dbReference type="HOGENOM" id="CLU_058591_2_1_1"/>
<dbReference type="InParanoid" id="Q9M339"/>
<dbReference type="OMA" id="YPAMIPV"/>
<dbReference type="OrthoDB" id="823656at2759"/>
<dbReference type="PhylomeDB" id="Q9M339"/>
<dbReference type="CD-CODE" id="4299E36E">
    <property type="entry name" value="Nucleolus"/>
</dbReference>
<dbReference type="PRO" id="PR:Q9M339"/>
<dbReference type="Proteomes" id="UP000006548">
    <property type="component" value="Chromosome 3"/>
</dbReference>
<dbReference type="ExpressionAtlas" id="Q9M339">
    <property type="expression patterns" value="baseline and differential"/>
</dbReference>
<dbReference type="GO" id="GO:0005829">
    <property type="term" value="C:cytosol"/>
    <property type="evidence" value="ECO:0007005"/>
    <property type="project" value="TAIR"/>
</dbReference>
<dbReference type="GO" id="GO:0022626">
    <property type="term" value="C:cytosolic ribosome"/>
    <property type="evidence" value="ECO:0007005"/>
    <property type="project" value="TAIR"/>
</dbReference>
<dbReference type="GO" id="GO:0022627">
    <property type="term" value="C:cytosolic small ribosomal subunit"/>
    <property type="evidence" value="ECO:0007005"/>
    <property type="project" value="TAIR"/>
</dbReference>
<dbReference type="GO" id="GO:0009506">
    <property type="term" value="C:plasmodesma"/>
    <property type="evidence" value="ECO:0007005"/>
    <property type="project" value="TAIR"/>
</dbReference>
<dbReference type="GO" id="GO:0003729">
    <property type="term" value="F:mRNA binding"/>
    <property type="evidence" value="ECO:0000314"/>
    <property type="project" value="TAIR"/>
</dbReference>
<dbReference type="GO" id="GO:0003735">
    <property type="term" value="F:structural constituent of ribosome"/>
    <property type="evidence" value="ECO:0000314"/>
    <property type="project" value="CAFA"/>
</dbReference>
<dbReference type="GO" id="GO:0006412">
    <property type="term" value="P:translation"/>
    <property type="evidence" value="ECO:0007669"/>
    <property type="project" value="InterPro"/>
</dbReference>
<dbReference type="CDD" id="cd02413">
    <property type="entry name" value="KH-II_40S_S3"/>
    <property type="match status" value="1"/>
</dbReference>
<dbReference type="FunFam" id="3.30.1140.32:FF:000004">
    <property type="entry name" value="40S ribosomal protein S3"/>
    <property type="match status" value="1"/>
</dbReference>
<dbReference type="FunFam" id="3.30.300.20:FF:000006">
    <property type="entry name" value="40S ribosomal protein S3"/>
    <property type="match status" value="1"/>
</dbReference>
<dbReference type="Gene3D" id="3.30.300.20">
    <property type="match status" value="1"/>
</dbReference>
<dbReference type="Gene3D" id="3.30.1140.32">
    <property type="entry name" value="Ribosomal protein S3, C-terminal domain"/>
    <property type="match status" value="1"/>
</dbReference>
<dbReference type="InterPro" id="IPR015946">
    <property type="entry name" value="KH_dom-like_a/b"/>
</dbReference>
<dbReference type="InterPro" id="IPR004044">
    <property type="entry name" value="KH_dom_type_2"/>
</dbReference>
<dbReference type="InterPro" id="IPR009019">
    <property type="entry name" value="KH_sf_prok-type"/>
</dbReference>
<dbReference type="InterPro" id="IPR036419">
    <property type="entry name" value="Ribosomal_S3_C_sf"/>
</dbReference>
<dbReference type="InterPro" id="IPR001351">
    <property type="entry name" value="Ribosomal_uS3_C"/>
</dbReference>
<dbReference type="InterPro" id="IPR005703">
    <property type="entry name" value="Ribosomal_uS3_euk/arc"/>
</dbReference>
<dbReference type="NCBIfam" id="NF003219">
    <property type="entry name" value="PRK04191.1"/>
    <property type="match status" value="1"/>
</dbReference>
<dbReference type="NCBIfam" id="TIGR01008">
    <property type="entry name" value="uS3_euk_arch"/>
    <property type="match status" value="1"/>
</dbReference>
<dbReference type="PANTHER" id="PTHR11760">
    <property type="entry name" value="30S/40S RIBOSOMAL PROTEIN S3"/>
    <property type="match status" value="1"/>
</dbReference>
<dbReference type="PANTHER" id="PTHR11760:SF69">
    <property type="entry name" value="SMALL RIBOSOMAL SUBUNIT PROTEIN US3X-RELATED"/>
    <property type="match status" value="1"/>
</dbReference>
<dbReference type="Pfam" id="PF07650">
    <property type="entry name" value="KH_2"/>
    <property type="match status" value="1"/>
</dbReference>
<dbReference type="Pfam" id="PF00189">
    <property type="entry name" value="Ribosomal_S3_C"/>
    <property type="match status" value="1"/>
</dbReference>
<dbReference type="SUPFAM" id="SSF54814">
    <property type="entry name" value="Prokaryotic type KH domain (KH-domain type II)"/>
    <property type="match status" value="1"/>
</dbReference>
<dbReference type="SUPFAM" id="SSF54821">
    <property type="entry name" value="Ribosomal protein S3 C-terminal domain"/>
    <property type="match status" value="1"/>
</dbReference>
<dbReference type="PROSITE" id="PS50823">
    <property type="entry name" value="KH_TYPE_2"/>
    <property type="match status" value="1"/>
</dbReference>
<keyword id="KW-0597">Phosphoprotein</keyword>
<keyword id="KW-1185">Reference proteome</keyword>
<keyword id="KW-0687">Ribonucleoprotein</keyword>
<keyword id="KW-0689">Ribosomal protein</keyword>
<keyword id="KW-0694">RNA-binding</keyword>
<feature type="chain" id="PRO_0000250178" description="Small ribosomal subunit protein uS3y">
    <location>
        <begin position="1"/>
        <end position="249"/>
    </location>
</feature>
<feature type="domain" description="KH type-2" evidence="1">
    <location>
        <begin position="21"/>
        <end position="92"/>
    </location>
</feature>
<feature type="modified residue" description="Phosphoserine" evidence="4">
    <location>
        <position position="212"/>
    </location>
</feature>
<comment type="similarity">
    <text evidence="3">Belongs to the universal ribosomal protein uS3 family.</text>
</comment>
<evidence type="ECO:0000255" key="1">
    <source>
        <dbReference type="PROSITE-ProRule" id="PRU00118"/>
    </source>
</evidence>
<evidence type="ECO:0000303" key="2">
    <source>
    </source>
</evidence>
<evidence type="ECO:0000305" key="3"/>
<evidence type="ECO:0007744" key="4">
    <source>
    </source>
</evidence>
<reference key="1">
    <citation type="journal article" date="2000" name="Nature">
        <title>Sequence and analysis of chromosome 3 of the plant Arabidopsis thaliana.</title>
        <authorList>
            <person name="Salanoubat M."/>
            <person name="Lemcke K."/>
            <person name="Rieger M."/>
            <person name="Ansorge W."/>
            <person name="Unseld M."/>
            <person name="Fartmann B."/>
            <person name="Valle G."/>
            <person name="Bloecker H."/>
            <person name="Perez-Alonso M."/>
            <person name="Obermaier B."/>
            <person name="Delseny M."/>
            <person name="Boutry M."/>
            <person name="Grivell L.A."/>
            <person name="Mache R."/>
            <person name="Puigdomenech P."/>
            <person name="De Simone V."/>
            <person name="Choisne N."/>
            <person name="Artiguenave F."/>
            <person name="Robert C."/>
            <person name="Brottier P."/>
            <person name="Wincker P."/>
            <person name="Cattolico L."/>
            <person name="Weissenbach J."/>
            <person name="Saurin W."/>
            <person name="Quetier F."/>
            <person name="Schaefer M."/>
            <person name="Mueller-Auer S."/>
            <person name="Gabel C."/>
            <person name="Fuchs M."/>
            <person name="Benes V."/>
            <person name="Wurmbach E."/>
            <person name="Drzonek H."/>
            <person name="Erfle H."/>
            <person name="Jordan N."/>
            <person name="Bangert S."/>
            <person name="Wiedelmann R."/>
            <person name="Kranz H."/>
            <person name="Voss H."/>
            <person name="Holland R."/>
            <person name="Brandt P."/>
            <person name="Nyakatura G."/>
            <person name="Vezzi A."/>
            <person name="D'Angelo M."/>
            <person name="Pallavicini A."/>
            <person name="Toppo S."/>
            <person name="Simionati B."/>
            <person name="Conrad A."/>
            <person name="Hornischer K."/>
            <person name="Kauer G."/>
            <person name="Loehnert T.-H."/>
            <person name="Nordsiek G."/>
            <person name="Reichelt J."/>
            <person name="Scharfe M."/>
            <person name="Schoen O."/>
            <person name="Bargues M."/>
            <person name="Terol J."/>
            <person name="Climent J."/>
            <person name="Navarro P."/>
            <person name="Collado C."/>
            <person name="Perez-Perez A."/>
            <person name="Ottenwaelder B."/>
            <person name="Duchemin D."/>
            <person name="Cooke R."/>
            <person name="Laudie M."/>
            <person name="Berger-Llauro C."/>
            <person name="Purnelle B."/>
            <person name="Masuy D."/>
            <person name="de Haan M."/>
            <person name="Maarse A.C."/>
            <person name="Alcaraz J.-P."/>
            <person name="Cottet A."/>
            <person name="Casacuberta E."/>
            <person name="Monfort A."/>
            <person name="Argiriou A."/>
            <person name="Flores M."/>
            <person name="Liguori R."/>
            <person name="Vitale D."/>
            <person name="Mannhaupt G."/>
            <person name="Haase D."/>
            <person name="Schoof H."/>
            <person name="Rudd S."/>
            <person name="Zaccaria P."/>
            <person name="Mewes H.-W."/>
            <person name="Mayer K.F.X."/>
            <person name="Kaul S."/>
            <person name="Town C.D."/>
            <person name="Koo H.L."/>
            <person name="Tallon L.J."/>
            <person name="Jenkins J."/>
            <person name="Rooney T."/>
            <person name="Rizzo M."/>
            <person name="Walts A."/>
            <person name="Utterback T."/>
            <person name="Fujii C.Y."/>
            <person name="Shea T.P."/>
            <person name="Creasy T.H."/>
            <person name="Haas B."/>
            <person name="Maiti R."/>
            <person name="Wu D."/>
            <person name="Peterson J."/>
            <person name="Van Aken S."/>
            <person name="Pai G."/>
            <person name="Militscher J."/>
            <person name="Sellers P."/>
            <person name="Gill J.E."/>
            <person name="Feldblyum T.V."/>
            <person name="Preuss D."/>
            <person name="Lin X."/>
            <person name="Nierman W.C."/>
            <person name="Salzberg S.L."/>
            <person name="White O."/>
            <person name="Venter J.C."/>
            <person name="Fraser C.M."/>
            <person name="Kaneko T."/>
            <person name="Nakamura Y."/>
            <person name="Sato S."/>
            <person name="Kato T."/>
            <person name="Asamizu E."/>
            <person name="Sasamoto S."/>
            <person name="Kimura T."/>
            <person name="Idesawa K."/>
            <person name="Kawashima K."/>
            <person name="Kishida Y."/>
            <person name="Kiyokawa C."/>
            <person name="Kohara M."/>
            <person name="Matsumoto M."/>
            <person name="Matsuno A."/>
            <person name="Muraki A."/>
            <person name="Nakayama S."/>
            <person name="Nakazaki N."/>
            <person name="Shinpo S."/>
            <person name="Takeuchi C."/>
            <person name="Wada T."/>
            <person name="Watanabe A."/>
            <person name="Yamada M."/>
            <person name="Yasuda M."/>
            <person name="Tabata S."/>
        </authorList>
    </citation>
    <scope>NUCLEOTIDE SEQUENCE [LARGE SCALE GENOMIC DNA]</scope>
    <source>
        <strain>cv. Columbia</strain>
    </source>
</reference>
<reference key="2">
    <citation type="journal article" date="2017" name="Plant J.">
        <title>Araport11: a complete reannotation of the Arabidopsis thaliana reference genome.</title>
        <authorList>
            <person name="Cheng C.Y."/>
            <person name="Krishnakumar V."/>
            <person name="Chan A.P."/>
            <person name="Thibaud-Nissen F."/>
            <person name="Schobel S."/>
            <person name="Town C.D."/>
        </authorList>
    </citation>
    <scope>GENOME REANNOTATION</scope>
    <source>
        <strain>cv. Columbia</strain>
    </source>
</reference>
<reference key="3">
    <citation type="journal article" date="2003" name="Science">
        <title>Empirical analysis of transcriptional activity in the Arabidopsis genome.</title>
        <authorList>
            <person name="Yamada K."/>
            <person name="Lim J."/>
            <person name="Dale J.M."/>
            <person name="Chen H."/>
            <person name="Shinn P."/>
            <person name="Palm C.J."/>
            <person name="Southwick A.M."/>
            <person name="Wu H.C."/>
            <person name="Kim C.J."/>
            <person name="Nguyen M."/>
            <person name="Pham P.K."/>
            <person name="Cheuk R.F."/>
            <person name="Karlin-Newmann G."/>
            <person name="Liu S.X."/>
            <person name="Lam B."/>
            <person name="Sakano H."/>
            <person name="Wu T."/>
            <person name="Yu G."/>
            <person name="Miranda M."/>
            <person name="Quach H.L."/>
            <person name="Tripp M."/>
            <person name="Chang C.H."/>
            <person name="Lee J.M."/>
            <person name="Toriumi M.J."/>
            <person name="Chan M.M."/>
            <person name="Tang C.C."/>
            <person name="Onodera C.S."/>
            <person name="Deng J.M."/>
            <person name="Akiyama K."/>
            <person name="Ansari Y."/>
            <person name="Arakawa T."/>
            <person name="Banh J."/>
            <person name="Banno F."/>
            <person name="Bowser L."/>
            <person name="Brooks S.Y."/>
            <person name="Carninci P."/>
            <person name="Chao Q."/>
            <person name="Choy N."/>
            <person name="Enju A."/>
            <person name="Goldsmith A.D."/>
            <person name="Gurjal M."/>
            <person name="Hansen N.F."/>
            <person name="Hayashizaki Y."/>
            <person name="Johnson-Hopson C."/>
            <person name="Hsuan V.W."/>
            <person name="Iida K."/>
            <person name="Karnes M."/>
            <person name="Khan S."/>
            <person name="Koesema E."/>
            <person name="Ishida J."/>
            <person name="Jiang P.X."/>
            <person name="Jones T."/>
            <person name="Kawai J."/>
            <person name="Kamiya A."/>
            <person name="Meyers C."/>
            <person name="Nakajima M."/>
            <person name="Narusaka M."/>
            <person name="Seki M."/>
            <person name="Sakurai T."/>
            <person name="Satou M."/>
            <person name="Tamse R."/>
            <person name="Vaysberg M."/>
            <person name="Wallender E.K."/>
            <person name="Wong C."/>
            <person name="Yamamura Y."/>
            <person name="Yuan S."/>
            <person name="Shinozaki K."/>
            <person name="Davis R.W."/>
            <person name="Theologis A."/>
            <person name="Ecker J.R."/>
        </authorList>
    </citation>
    <scope>NUCLEOTIDE SEQUENCE [LARGE SCALE MRNA]</scope>
    <source>
        <strain>cv. Columbia</strain>
    </source>
</reference>
<reference key="4">
    <citation type="submission" date="2002-03" db="EMBL/GenBank/DDBJ databases">
        <title>Full-length cDNA from Arabidopsis thaliana.</title>
        <authorList>
            <person name="Brover V.V."/>
            <person name="Troukhan M.E."/>
            <person name="Alexandrov N.A."/>
            <person name="Lu Y.-P."/>
            <person name="Flavell R.B."/>
            <person name="Feldmann K.A."/>
        </authorList>
    </citation>
    <scope>NUCLEOTIDE SEQUENCE [LARGE SCALE MRNA]</scope>
</reference>
<reference key="5">
    <citation type="journal article" date="2001" name="Plant Physiol.">
        <title>The organization of cytoplasmic ribosomal protein genes in the Arabidopsis genome.</title>
        <authorList>
            <person name="Barakat A."/>
            <person name="Szick-Miranda K."/>
            <person name="Chang I.-F."/>
            <person name="Guyot R."/>
            <person name="Blanc G."/>
            <person name="Cooke R."/>
            <person name="Delseny M."/>
            <person name="Bailey-Serres J."/>
        </authorList>
    </citation>
    <scope>GENE FAMILY ORGANIZATION</scope>
    <scope>NOMENCLATURE</scope>
</reference>
<reference key="6">
    <citation type="journal article" date="2009" name="Plant Physiol.">
        <title>Large-scale Arabidopsis phosphoproteome profiling reveals novel chloroplast kinase substrates and phosphorylation networks.</title>
        <authorList>
            <person name="Reiland S."/>
            <person name="Messerli G."/>
            <person name="Baerenfaller K."/>
            <person name="Gerrits B."/>
            <person name="Endler A."/>
            <person name="Grossmann J."/>
            <person name="Gruissem W."/>
            <person name="Baginsky S."/>
        </authorList>
    </citation>
    <scope>PHOSPHORYLATION [LARGE SCALE ANALYSIS] AT SER-212</scope>
    <scope>IDENTIFICATION BY MASS SPECTROMETRY [LARGE SCALE ANALYSIS]</scope>
</reference>
<reference key="7">
    <citation type="journal article" date="2023" name="Plant Cell">
        <title>An updated nomenclature for plant ribosomal protein genes.</title>
        <authorList>
            <person name="Scarpin M.R."/>
            <person name="Busche M."/>
            <person name="Martinez R.E."/>
            <person name="Harper L.C."/>
            <person name="Reiser L."/>
            <person name="Szakonyi D."/>
            <person name="Merchante C."/>
            <person name="Lan T."/>
            <person name="Xiong W."/>
            <person name="Mo B."/>
            <person name="Tang G."/>
            <person name="Chen X."/>
            <person name="Bailey-Serres J."/>
            <person name="Browning K.S."/>
            <person name="Brunkard J.O."/>
        </authorList>
    </citation>
    <scope>NOMENCLATURE</scope>
</reference>
<proteinExistence type="evidence at protein level"/>
<accession>Q9M339</accession>